<accession>A3CZK5</accession>
<proteinExistence type="inferred from homology"/>
<sequence length="522" mass="56926">MSNRVIIFDTTLRDGEQALAASLSVKEKLQIAMALERLGVDVMEVGFPVSSPGDFESVQTIARTIKNSRVCALSRALEKDIDAAAQALSVADQFRIHTFISTSTIHVESKLKRSFDQVLEMAVSAVKYARRFTDDVEFSCEDAGRTPIDNLCRMVEAAILAGARTINIPDTVGYTVPSEFGTIIQTLFNRVPNIDQAVISVHCHDDLGLSVANSITAVQHGARQIECTINGIGERAGNCSLEEIAMILATRKGMLGLETGINAKEIHRTSNLVSQLCNMPVQANKAIVGANAFTHSSGIHQDGMLKAQNTYEIMTPESIGLNRNNLNMTSRSGRHVIKHRMEEMGYSEHDYNMDALYEEFLKLADKKGQVFDYDLEALAFMEAQAEEDNHYQLQQLVVQSDSTEGVATATVRIEVGGEIKTEAATGNGPVDAAYNAIARATDRRIDIISYKLGAKGVGQNALGQVDITAVYHEQNFHGVGLATDVVEASARALVHVMNLTCRADKVADYKQSMQKNRELGGV</sequence>
<organism>
    <name type="scientific">Shewanella baltica (strain OS155 / ATCC BAA-1091)</name>
    <dbReference type="NCBI Taxonomy" id="325240"/>
    <lineage>
        <taxon>Bacteria</taxon>
        <taxon>Pseudomonadati</taxon>
        <taxon>Pseudomonadota</taxon>
        <taxon>Gammaproteobacteria</taxon>
        <taxon>Alteromonadales</taxon>
        <taxon>Shewanellaceae</taxon>
        <taxon>Shewanella</taxon>
    </lineage>
</organism>
<reference key="1">
    <citation type="submission" date="2007-02" db="EMBL/GenBank/DDBJ databases">
        <title>Complete sequence of chromosome of Shewanella baltica OS155.</title>
        <authorList>
            <consortium name="US DOE Joint Genome Institute"/>
            <person name="Copeland A."/>
            <person name="Lucas S."/>
            <person name="Lapidus A."/>
            <person name="Barry K."/>
            <person name="Detter J.C."/>
            <person name="Glavina del Rio T."/>
            <person name="Hammon N."/>
            <person name="Israni S."/>
            <person name="Dalin E."/>
            <person name="Tice H."/>
            <person name="Pitluck S."/>
            <person name="Sims D.R."/>
            <person name="Brettin T."/>
            <person name="Bruce D."/>
            <person name="Han C."/>
            <person name="Tapia R."/>
            <person name="Brainard J."/>
            <person name="Schmutz J."/>
            <person name="Larimer F."/>
            <person name="Land M."/>
            <person name="Hauser L."/>
            <person name="Kyrpides N."/>
            <person name="Mikhailova N."/>
            <person name="Brettar I."/>
            <person name="Klappenbach J."/>
            <person name="Konstantinidis K."/>
            <person name="Rodrigues J."/>
            <person name="Tiedje J."/>
            <person name="Richardson P."/>
        </authorList>
    </citation>
    <scope>NUCLEOTIDE SEQUENCE [LARGE SCALE GENOMIC DNA]</scope>
    <source>
        <strain>OS155 / ATCC BAA-1091</strain>
    </source>
</reference>
<dbReference type="EC" id="2.3.3.13" evidence="1"/>
<dbReference type="EMBL" id="CP000563">
    <property type="protein sequence ID" value="ABN59918.1"/>
    <property type="molecule type" value="Genomic_DNA"/>
</dbReference>
<dbReference type="RefSeq" id="WP_011845607.1">
    <property type="nucleotide sequence ID" value="NC_009052.1"/>
</dbReference>
<dbReference type="SMR" id="A3CZK5"/>
<dbReference type="STRING" id="325240.Sbal_0386"/>
<dbReference type="KEGG" id="sbl:Sbal_0386"/>
<dbReference type="HOGENOM" id="CLU_022158_0_1_6"/>
<dbReference type="OrthoDB" id="9803573at2"/>
<dbReference type="UniPathway" id="UPA00048">
    <property type="reaction ID" value="UER00070"/>
</dbReference>
<dbReference type="Proteomes" id="UP000001557">
    <property type="component" value="Chromosome"/>
</dbReference>
<dbReference type="GO" id="GO:0005829">
    <property type="term" value="C:cytosol"/>
    <property type="evidence" value="ECO:0007669"/>
    <property type="project" value="TreeGrafter"/>
</dbReference>
<dbReference type="GO" id="GO:0003852">
    <property type="term" value="F:2-isopropylmalate synthase activity"/>
    <property type="evidence" value="ECO:0007669"/>
    <property type="project" value="UniProtKB-UniRule"/>
</dbReference>
<dbReference type="GO" id="GO:0003985">
    <property type="term" value="F:acetyl-CoA C-acetyltransferase activity"/>
    <property type="evidence" value="ECO:0007669"/>
    <property type="project" value="UniProtKB-UniRule"/>
</dbReference>
<dbReference type="GO" id="GO:0030145">
    <property type="term" value="F:manganese ion binding"/>
    <property type="evidence" value="ECO:0007669"/>
    <property type="project" value="UniProtKB-UniRule"/>
</dbReference>
<dbReference type="GO" id="GO:0009098">
    <property type="term" value="P:L-leucine biosynthetic process"/>
    <property type="evidence" value="ECO:0007669"/>
    <property type="project" value="UniProtKB-UniRule"/>
</dbReference>
<dbReference type="CDD" id="cd07940">
    <property type="entry name" value="DRE_TIM_IPMS"/>
    <property type="match status" value="1"/>
</dbReference>
<dbReference type="FunFam" id="1.10.238.260:FF:000001">
    <property type="entry name" value="2-isopropylmalate synthase"/>
    <property type="match status" value="1"/>
</dbReference>
<dbReference type="FunFam" id="3.20.20.70:FF:000010">
    <property type="entry name" value="2-isopropylmalate synthase"/>
    <property type="match status" value="1"/>
</dbReference>
<dbReference type="Gene3D" id="1.10.238.260">
    <property type="match status" value="1"/>
</dbReference>
<dbReference type="Gene3D" id="3.30.160.270">
    <property type="match status" value="1"/>
</dbReference>
<dbReference type="Gene3D" id="3.20.20.70">
    <property type="entry name" value="Aldolase class I"/>
    <property type="match status" value="1"/>
</dbReference>
<dbReference type="HAMAP" id="MF_01025">
    <property type="entry name" value="LeuA_type1"/>
    <property type="match status" value="1"/>
</dbReference>
<dbReference type="InterPro" id="IPR050073">
    <property type="entry name" value="2-IPM_HCS-like"/>
</dbReference>
<dbReference type="InterPro" id="IPR013709">
    <property type="entry name" value="2-isopropylmalate_synth_dimer"/>
</dbReference>
<dbReference type="InterPro" id="IPR002034">
    <property type="entry name" value="AIPM/Hcit_synth_CS"/>
</dbReference>
<dbReference type="InterPro" id="IPR013785">
    <property type="entry name" value="Aldolase_TIM"/>
</dbReference>
<dbReference type="InterPro" id="IPR054691">
    <property type="entry name" value="LeuA/HCS_post-cat"/>
</dbReference>
<dbReference type="InterPro" id="IPR036230">
    <property type="entry name" value="LeuA_allosteric_dom_sf"/>
</dbReference>
<dbReference type="InterPro" id="IPR005671">
    <property type="entry name" value="LeuA_bact_synth"/>
</dbReference>
<dbReference type="InterPro" id="IPR000891">
    <property type="entry name" value="PYR_CT"/>
</dbReference>
<dbReference type="NCBIfam" id="TIGR00973">
    <property type="entry name" value="leuA_bact"/>
    <property type="match status" value="1"/>
</dbReference>
<dbReference type="NCBIfam" id="NF002084">
    <property type="entry name" value="PRK00915.1-1"/>
    <property type="match status" value="1"/>
</dbReference>
<dbReference type="NCBIfam" id="NF002086">
    <property type="entry name" value="PRK00915.1-3"/>
    <property type="match status" value="1"/>
</dbReference>
<dbReference type="PANTHER" id="PTHR10277:SF9">
    <property type="entry name" value="2-ISOPROPYLMALATE SYNTHASE 1, CHLOROPLASTIC-RELATED"/>
    <property type="match status" value="1"/>
</dbReference>
<dbReference type="PANTHER" id="PTHR10277">
    <property type="entry name" value="HOMOCITRATE SYNTHASE-RELATED"/>
    <property type="match status" value="1"/>
</dbReference>
<dbReference type="Pfam" id="PF22617">
    <property type="entry name" value="HCS_D2"/>
    <property type="match status" value="1"/>
</dbReference>
<dbReference type="Pfam" id="PF00682">
    <property type="entry name" value="HMGL-like"/>
    <property type="match status" value="1"/>
</dbReference>
<dbReference type="Pfam" id="PF08502">
    <property type="entry name" value="LeuA_dimer"/>
    <property type="match status" value="1"/>
</dbReference>
<dbReference type="SMART" id="SM00917">
    <property type="entry name" value="LeuA_dimer"/>
    <property type="match status" value="1"/>
</dbReference>
<dbReference type="SUPFAM" id="SSF110921">
    <property type="entry name" value="2-isopropylmalate synthase LeuA, allosteric (dimerisation) domain"/>
    <property type="match status" value="1"/>
</dbReference>
<dbReference type="SUPFAM" id="SSF51569">
    <property type="entry name" value="Aldolase"/>
    <property type="match status" value="1"/>
</dbReference>
<dbReference type="PROSITE" id="PS00815">
    <property type="entry name" value="AIPM_HOMOCIT_SYNTH_1"/>
    <property type="match status" value="1"/>
</dbReference>
<dbReference type="PROSITE" id="PS00816">
    <property type="entry name" value="AIPM_HOMOCIT_SYNTH_2"/>
    <property type="match status" value="1"/>
</dbReference>
<dbReference type="PROSITE" id="PS50991">
    <property type="entry name" value="PYR_CT"/>
    <property type="match status" value="1"/>
</dbReference>
<gene>
    <name evidence="1" type="primary">leuA</name>
    <name type="ordered locus">Sbal_0386</name>
</gene>
<comment type="function">
    <text evidence="1">Catalyzes the condensation of the acetyl group of acetyl-CoA with 3-methyl-2-oxobutanoate (2-ketoisovalerate) to form 3-carboxy-3-hydroxy-4-methylpentanoate (2-isopropylmalate).</text>
</comment>
<comment type="catalytic activity">
    <reaction evidence="1">
        <text>3-methyl-2-oxobutanoate + acetyl-CoA + H2O = (2S)-2-isopropylmalate + CoA + H(+)</text>
        <dbReference type="Rhea" id="RHEA:21524"/>
        <dbReference type="ChEBI" id="CHEBI:1178"/>
        <dbReference type="ChEBI" id="CHEBI:11851"/>
        <dbReference type="ChEBI" id="CHEBI:15377"/>
        <dbReference type="ChEBI" id="CHEBI:15378"/>
        <dbReference type="ChEBI" id="CHEBI:57287"/>
        <dbReference type="ChEBI" id="CHEBI:57288"/>
        <dbReference type="EC" id="2.3.3.13"/>
    </reaction>
</comment>
<comment type="cofactor">
    <cofactor evidence="1">
        <name>Mn(2+)</name>
        <dbReference type="ChEBI" id="CHEBI:29035"/>
    </cofactor>
</comment>
<comment type="pathway">
    <text evidence="1">Amino-acid biosynthesis; L-leucine biosynthesis; L-leucine from 3-methyl-2-oxobutanoate: step 1/4.</text>
</comment>
<comment type="subunit">
    <text evidence="1">Homodimer.</text>
</comment>
<comment type="subcellular location">
    <subcellularLocation>
        <location evidence="1">Cytoplasm</location>
    </subcellularLocation>
</comment>
<comment type="similarity">
    <text evidence="1">Belongs to the alpha-IPM synthase/homocitrate synthase family. LeuA type 1 subfamily.</text>
</comment>
<keyword id="KW-0028">Amino-acid biosynthesis</keyword>
<keyword id="KW-0100">Branched-chain amino acid biosynthesis</keyword>
<keyword id="KW-0963">Cytoplasm</keyword>
<keyword id="KW-0432">Leucine biosynthesis</keyword>
<keyword id="KW-0464">Manganese</keyword>
<keyword id="KW-0479">Metal-binding</keyword>
<keyword id="KW-1185">Reference proteome</keyword>
<keyword id="KW-0808">Transferase</keyword>
<feature type="chain" id="PRO_1000149279" description="2-isopropylmalate synthase">
    <location>
        <begin position="1"/>
        <end position="522"/>
    </location>
</feature>
<feature type="domain" description="Pyruvate carboxyltransferase" evidence="1">
    <location>
        <begin position="5"/>
        <end position="267"/>
    </location>
</feature>
<feature type="region of interest" description="Regulatory domain" evidence="1">
    <location>
        <begin position="392"/>
        <end position="522"/>
    </location>
</feature>
<feature type="binding site" evidence="1">
    <location>
        <position position="14"/>
    </location>
    <ligand>
        <name>Mn(2+)</name>
        <dbReference type="ChEBI" id="CHEBI:29035"/>
    </ligand>
</feature>
<feature type="binding site" evidence="1">
    <location>
        <position position="202"/>
    </location>
    <ligand>
        <name>Mn(2+)</name>
        <dbReference type="ChEBI" id="CHEBI:29035"/>
    </ligand>
</feature>
<feature type="binding site" evidence="1">
    <location>
        <position position="204"/>
    </location>
    <ligand>
        <name>Mn(2+)</name>
        <dbReference type="ChEBI" id="CHEBI:29035"/>
    </ligand>
</feature>
<feature type="binding site" evidence="1">
    <location>
        <position position="238"/>
    </location>
    <ligand>
        <name>Mn(2+)</name>
        <dbReference type="ChEBI" id="CHEBI:29035"/>
    </ligand>
</feature>
<evidence type="ECO:0000255" key="1">
    <source>
        <dbReference type="HAMAP-Rule" id="MF_01025"/>
    </source>
</evidence>
<protein>
    <recommendedName>
        <fullName evidence="1">2-isopropylmalate synthase</fullName>
        <ecNumber evidence="1">2.3.3.13</ecNumber>
    </recommendedName>
    <alternativeName>
        <fullName evidence="1">Alpha-IPM synthase</fullName>
    </alternativeName>
    <alternativeName>
        <fullName evidence="1">Alpha-isopropylmalate synthase</fullName>
    </alternativeName>
</protein>
<name>LEU1_SHEB5</name>